<feature type="chain" id="PRO_0000244532" description="ATP synthase gamma chain">
    <location>
        <begin position="1"/>
        <end position="323"/>
    </location>
</feature>
<feature type="region of interest" description="Insert">
    <location>
        <begin position="206"/>
        <end position="240"/>
    </location>
</feature>
<keyword id="KW-0066">ATP synthesis</keyword>
<keyword id="KW-0997">Cell inner membrane</keyword>
<keyword id="KW-1003">Cell membrane</keyword>
<keyword id="KW-0139">CF(1)</keyword>
<keyword id="KW-0375">Hydrogen ion transport</keyword>
<keyword id="KW-0406">Ion transport</keyword>
<keyword id="KW-0472">Membrane</keyword>
<keyword id="KW-0813">Transport</keyword>
<name>ATPG_RICCN</name>
<comment type="function">
    <text evidence="1">Produces ATP from ADP in the presence of a proton gradient across the membrane. The gamma chain is believed to be important in regulating ATPase activity and the flow of protons through the CF(0) complex.</text>
</comment>
<comment type="subunit">
    <text evidence="1">F-type ATPases have 2 components, CF(1) - the catalytic core - and CF(0) - the membrane proton channel. CF(1) has five subunits: alpha(3), beta(3), gamma(1), delta(1), epsilon(1). CF(0) has three main subunits: a, b and c.</text>
</comment>
<comment type="subcellular location">
    <subcellularLocation>
        <location evidence="1">Cell inner membrane</location>
        <topology evidence="1">Peripheral membrane protein</topology>
    </subcellularLocation>
</comment>
<comment type="similarity">
    <text evidence="1">Belongs to the ATPase gamma chain family.</text>
</comment>
<gene>
    <name evidence="1" type="primary">atpG</name>
    <name type="ordered locus">RC1236</name>
</gene>
<proteinExistence type="inferred from homology"/>
<evidence type="ECO:0000255" key="1">
    <source>
        <dbReference type="HAMAP-Rule" id="MF_00815"/>
    </source>
</evidence>
<protein>
    <recommendedName>
        <fullName evidence="1">ATP synthase gamma chain</fullName>
    </recommendedName>
    <alternativeName>
        <fullName evidence="1">ATP synthase F1 sector gamma subunit</fullName>
    </alternativeName>
    <alternativeName>
        <fullName evidence="1">F-ATPase gamma subunit</fullName>
    </alternativeName>
</protein>
<reference key="1">
    <citation type="journal article" date="2001" name="Science">
        <title>Mechanisms of evolution in Rickettsia conorii and R. prowazekii.</title>
        <authorList>
            <person name="Ogata H."/>
            <person name="Audic S."/>
            <person name="Renesto-Audiffren P."/>
            <person name="Fournier P.-E."/>
            <person name="Barbe V."/>
            <person name="Samson D."/>
            <person name="Roux V."/>
            <person name="Cossart P."/>
            <person name="Weissenbach J."/>
            <person name="Claverie J.-M."/>
            <person name="Raoult D."/>
        </authorList>
    </citation>
    <scope>NUCLEOTIDE SEQUENCE [LARGE SCALE GENOMIC DNA]</scope>
    <source>
        <strain>ATCC VR-613 / Malish 7</strain>
    </source>
</reference>
<sequence>MSNLKQLRTRIKSVKSTQKITKAMQLVSASKMAKIKSQIANSNFYIEAVSKMMSAILSIDMYELSIEEQKFFNTVPNKANLLIVMTSQRGLCGTFNYSIIKQVKNDIKELENKGEQIKLIIIGKKGYEALKRQYVNYIDSYFELPKIHDENLMLQVKQKIMSAVENLEVSNCVIYFNKFKNAMTQIMTRQQILPVAKYQDDSMIDNPIVNLVGFGYKERGVKPINNRRATSDIVGESKSIDYNYEYEGESLISNLINLYVNSQINYALLQSRASEEGARMTAMENATNNANDLISKLVLKLNRSRQAIITTELIEIIAGSEVV</sequence>
<dbReference type="EMBL" id="AE006914">
    <property type="protein sequence ID" value="AAL03774.1"/>
    <property type="molecule type" value="Genomic_DNA"/>
</dbReference>
<dbReference type="PIR" id="D97854">
    <property type="entry name" value="D97854"/>
</dbReference>
<dbReference type="RefSeq" id="WP_010977801.1">
    <property type="nucleotide sequence ID" value="NC_003103.1"/>
</dbReference>
<dbReference type="SMR" id="Q92G87"/>
<dbReference type="GeneID" id="928332"/>
<dbReference type="KEGG" id="rco:RC1236"/>
<dbReference type="PATRIC" id="fig|272944.4.peg.1417"/>
<dbReference type="HOGENOM" id="CLU_050669_0_1_5"/>
<dbReference type="Proteomes" id="UP000000816">
    <property type="component" value="Chromosome"/>
</dbReference>
<dbReference type="GO" id="GO:0005886">
    <property type="term" value="C:plasma membrane"/>
    <property type="evidence" value="ECO:0007669"/>
    <property type="project" value="UniProtKB-SubCell"/>
</dbReference>
<dbReference type="GO" id="GO:0045259">
    <property type="term" value="C:proton-transporting ATP synthase complex"/>
    <property type="evidence" value="ECO:0007669"/>
    <property type="project" value="UniProtKB-KW"/>
</dbReference>
<dbReference type="GO" id="GO:0005524">
    <property type="term" value="F:ATP binding"/>
    <property type="evidence" value="ECO:0007669"/>
    <property type="project" value="UniProtKB-UniRule"/>
</dbReference>
<dbReference type="GO" id="GO:0046933">
    <property type="term" value="F:proton-transporting ATP synthase activity, rotational mechanism"/>
    <property type="evidence" value="ECO:0007669"/>
    <property type="project" value="UniProtKB-UniRule"/>
</dbReference>
<dbReference type="GO" id="GO:0042777">
    <property type="term" value="P:proton motive force-driven plasma membrane ATP synthesis"/>
    <property type="evidence" value="ECO:0007669"/>
    <property type="project" value="UniProtKB-UniRule"/>
</dbReference>
<dbReference type="CDD" id="cd12151">
    <property type="entry name" value="F1-ATPase_gamma"/>
    <property type="match status" value="1"/>
</dbReference>
<dbReference type="Gene3D" id="3.40.1380.10">
    <property type="match status" value="1"/>
</dbReference>
<dbReference type="Gene3D" id="1.10.287.80">
    <property type="entry name" value="ATP synthase, gamma subunit, helix hairpin domain"/>
    <property type="match status" value="2"/>
</dbReference>
<dbReference type="HAMAP" id="MF_00815">
    <property type="entry name" value="ATP_synth_gamma_bact"/>
    <property type="match status" value="1"/>
</dbReference>
<dbReference type="InterPro" id="IPR035968">
    <property type="entry name" value="ATP_synth_F1_ATPase_gsu"/>
</dbReference>
<dbReference type="InterPro" id="IPR000131">
    <property type="entry name" value="ATP_synth_F1_gsu"/>
</dbReference>
<dbReference type="InterPro" id="IPR022436">
    <property type="entry name" value="RPE2"/>
</dbReference>
<dbReference type="NCBIfam" id="TIGR01146">
    <property type="entry name" value="ATPsyn_F1gamma"/>
    <property type="match status" value="1"/>
</dbReference>
<dbReference type="NCBIfam" id="TIGR03774">
    <property type="entry name" value="RPE2"/>
    <property type="match status" value="1"/>
</dbReference>
<dbReference type="PANTHER" id="PTHR11693">
    <property type="entry name" value="ATP SYNTHASE GAMMA CHAIN"/>
    <property type="match status" value="1"/>
</dbReference>
<dbReference type="PANTHER" id="PTHR11693:SF22">
    <property type="entry name" value="ATP SYNTHASE SUBUNIT GAMMA, MITOCHONDRIAL"/>
    <property type="match status" value="1"/>
</dbReference>
<dbReference type="Pfam" id="PF00231">
    <property type="entry name" value="ATP-synt"/>
    <property type="match status" value="1"/>
</dbReference>
<dbReference type="PRINTS" id="PR00126">
    <property type="entry name" value="ATPASEGAMMA"/>
</dbReference>
<dbReference type="SUPFAM" id="SSF52943">
    <property type="entry name" value="ATP synthase (F1-ATPase), gamma subunit"/>
    <property type="match status" value="1"/>
</dbReference>
<organism>
    <name type="scientific">Rickettsia conorii (strain ATCC VR-613 / Malish 7)</name>
    <dbReference type="NCBI Taxonomy" id="272944"/>
    <lineage>
        <taxon>Bacteria</taxon>
        <taxon>Pseudomonadati</taxon>
        <taxon>Pseudomonadota</taxon>
        <taxon>Alphaproteobacteria</taxon>
        <taxon>Rickettsiales</taxon>
        <taxon>Rickettsiaceae</taxon>
        <taxon>Rickettsieae</taxon>
        <taxon>Rickettsia</taxon>
        <taxon>spotted fever group</taxon>
    </lineage>
</organism>
<accession>Q92G87</accession>